<keyword id="KW-1185">Reference proteome</keyword>
<keyword id="KW-0808">Transferase</keyword>
<keyword id="KW-0833">Ubl conjugation pathway</keyword>
<protein>
    <recommendedName>
        <fullName>E3 UFM1-protein ligase 1 homolog</fullName>
        <ecNumber>2.3.2.-</ecNumber>
    </recommendedName>
    <alternativeName>
        <fullName evidence="3">E3 UFM1-protein transferase 1 homolog</fullName>
    </alternativeName>
</protein>
<name>UFL1_DROWI</name>
<reference key="1">
    <citation type="journal article" date="2007" name="Nature">
        <title>Evolution of genes and genomes on the Drosophila phylogeny.</title>
        <authorList>
            <consortium name="Drosophila 12 genomes consortium"/>
        </authorList>
    </citation>
    <scope>NUCLEOTIDE SEQUENCE [LARGE SCALE GENOMIC DNA]</scope>
    <source>
        <strain>Tucson 14030-0811.24</strain>
    </source>
</reference>
<sequence>MGSDWDEIKRLAADFQKAQLTSTLQQLSERNCVEIVALLLEKQLLDVVFTNDGKEYITPDHLEREIQDELYTNGGRANLVEVSKTLNVDLSRIETLAERIAEENPQIHLILGQLIDEDYISHIAQEINEKLALRGEISISDLASQFDLPSDFLQHQVVEKHLGKTIKGRQDSTNPRVFFTQAYIQRCKAKIRGALNAITRPTNVATILQQINVQEKIFHSLLDEISPAGQVTSKLSNAQYVPHIYAKTQSEWVQSFFKQNGFIEYEAINKLGISDPKSYILKQLPQEELYFLKRIALQQRLVDLTVVTALNECNATKQYLDLSTILPSNLSVEDIEEVFHTLTSGPKQSHLSTLVYLDGIVFSQPYLNELIQPCQELALSQGKSAIDSGIYQQYIVDKTLAQKGGNASNQLDDDEDGKPDKRDERRKKAASGKAGGGAQGRETKTKSTKKHQRGRAAAAQHSDDDDDDFQRGGGGGGSNKKSVKPLDLVKCEDVVKLIFPVLEEEGIEHLAKPIAKLYLQQLNQSALAKAQELYEATPQTNRRQTHASIQERINTLLVDIRLYEKGLKLLPQDTQAQLVKYLLKSLGNEICNELALYVASECNLTVKNNNLNVDQRNKLAQECDAQYRAVLVEQNKALNKSIDDFELATESVLKVCSMIIKKVDKKKDRLLIADHKQKLQQQLLENQEPALILHLAALILFTSISGCILHASGKFVSSILQYIRGSLDDQQNALLISYHDLVLKVLQASPESAESKLAHEQLQGLQSKVVELAQNFSRASVSKAD</sequence>
<accession>B4NAB3</accession>
<organism>
    <name type="scientific">Drosophila willistoni</name>
    <name type="common">Fruit fly</name>
    <dbReference type="NCBI Taxonomy" id="7260"/>
    <lineage>
        <taxon>Eukaryota</taxon>
        <taxon>Metazoa</taxon>
        <taxon>Ecdysozoa</taxon>
        <taxon>Arthropoda</taxon>
        <taxon>Hexapoda</taxon>
        <taxon>Insecta</taxon>
        <taxon>Pterygota</taxon>
        <taxon>Neoptera</taxon>
        <taxon>Endopterygota</taxon>
        <taxon>Diptera</taxon>
        <taxon>Brachycera</taxon>
        <taxon>Muscomorpha</taxon>
        <taxon>Ephydroidea</taxon>
        <taxon>Drosophilidae</taxon>
        <taxon>Drosophila</taxon>
        <taxon>Sophophora</taxon>
    </lineage>
</organism>
<evidence type="ECO:0000250" key="1">
    <source>
        <dbReference type="UniProtKB" id="O94874"/>
    </source>
</evidence>
<evidence type="ECO:0000256" key="2">
    <source>
        <dbReference type="SAM" id="MobiDB-lite"/>
    </source>
</evidence>
<evidence type="ECO:0000305" key="3"/>
<comment type="function">
    <text evidence="1">E3 UFM1-protein ligase that mediates ufmylation of target proteins.</text>
</comment>
<comment type="similarity">
    <text evidence="3">Belongs to the UFL1 family.</text>
</comment>
<proteinExistence type="inferred from homology"/>
<gene>
    <name type="ORF">GK12257</name>
</gene>
<feature type="chain" id="PRO_0000391889" description="E3 UFM1-protein ligase 1 homolog">
    <location>
        <begin position="1"/>
        <end position="785"/>
    </location>
</feature>
<feature type="region of interest" description="Disordered" evidence="2">
    <location>
        <begin position="404"/>
        <end position="483"/>
    </location>
</feature>
<dbReference type="EC" id="2.3.2.-"/>
<dbReference type="EMBL" id="CH964232">
    <property type="protein sequence ID" value="EDW81800.1"/>
    <property type="molecule type" value="Genomic_DNA"/>
</dbReference>
<dbReference type="SMR" id="B4NAB3"/>
<dbReference type="STRING" id="7260.B4NAB3"/>
<dbReference type="EnsemblMetazoa" id="FBtr0242908">
    <property type="protein sequence ID" value="FBpp0241400"/>
    <property type="gene ID" value="FBgn0214267"/>
</dbReference>
<dbReference type="EnsemblMetazoa" id="XM_002070778.4">
    <property type="protein sequence ID" value="XP_002070814.1"/>
    <property type="gene ID" value="LOC6647229"/>
</dbReference>
<dbReference type="GeneID" id="6647229"/>
<dbReference type="KEGG" id="dwi:6647229"/>
<dbReference type="CTD" id="23376"/>
<dbReference type="eggNOG" id="KOG2235">
    <property type="taxonomic scope" value="Eukaryota"/>
</dbReference>
<dbReference type="HOGENOM" id="CLU_012417_1_1_1"/>
<dbReference type="OMA" id="CILHASG"/>
<dbReference type="OrthoDB" id="10258297at2759"/>
<dbReference type="PhylomeDB" id="B4NAB3"/>
<dbReference type="Proteomes" id="UP000007798">
    <property type="component" value="Unassembled WGS sequence"/>
</dbReference>
<dbReference type="GO" id="GO:0005789">
    <property type="term" value="C:endoplasmic reticulum membrane"/>
    <property type="evidence" value="ECO:0007669"/>
    <property type="project" value="TreeGrafter"/>
</dbReference>
<dbReference type="GO" id="GO:0061666">
    <property type="term" value="F:UFM1 ligase activity"/>
    <property type="evidence" value="ECO:0007669"/>
    <property type="project" value="InterPro"/>
</dbReference>
<dbReference type="GO" id="GO:1990592">
    <property type="term" value="P:protein K69-linked ufmylation"/>
    <property type="evidence" value="ECO:0007669"/>
    <property type="project" value="TreeGrafter"/>
</dbReference>
<dbReference type="GO" id="GO:0032434">
    <property type="term" value="P:regulation of proteasomal ubiquitin-dependent protein catabolic process"/>
    <property type="evidence" value="ECO:0007669"/>
    <property type="project" value="TreeGrafter"/>
</dbReference>
<dbReference type="GO" id="GO:0034976">
    <property type="term" value="P:response to endoplasmic reticulum stress"/>
    <property type="evidence" value="ECO:0007669"/>
    <property type="project" value="TreeGrafter"/>
</dbReference>
<dbReference type="InterPro" id="IPR018611">
    <property type="entry name" value="Ufl1"/>
</dbReference>
<dbReference type="InterPro" id="IPR056761">
    <property type="entry name" value="Ufl1-like_C"/>
</dbReference>
<dbReference type="InterPro" id="IPR056580">
    <property type="entry name" value="Ufl1_dom"/>
</dbReference>
<dbReference type="InterPro" id="IPR056579">
    <property type="entry name" value="Ufl1_N"/>
</dbReference>
<dbReference type="PANTHER" id="PTHR31057">
    <property type="entry name" value="E3 UFM1-PROTEIN LIGASE 1"/>
    <property type="match status" value="1"/>
</dbReference>
<dbReference type="PANTHER" id="PTHR31057:SF0">
    <property type="entry name" value="E3 UFM1-PROTEIN LIGASE 1"/>
    <property type="match status" value="1"/>
</dbReference>
<dbReference type="Pfam" id="PF09743">
    <property type="entry name" value="E3_UFM1_ligase"/>
    <property type="match status" value="1"/>
</dbReference>
<dbReference type="Pfam" id="PF23659">
    <property type="entry name" value="UFL1"/>
    <property type="match status" value="1"/>
</dbReference>
<dbReference type="Pfam" id="PF25041">
    <property type="entry name" value="UFL1_C"/>
    <property type="match status" value="1"/>
</dbReference>